<name>PUR1_YEAST</name>
<proteinExistence type="evidence at protein level"/>
<sequence length="510" mass="56719">MCGILGIVLANQTTPVAPELCDGCIFLQHRGQDAAGIATCGSRGRIYQCKGNGMARDVFTQQRVSGLAGSMGIAHLRYPTAGSSANSEAQPFYVNSPYGINLAHNGNLVNTASLKRYMDEDVHRHINTDSDSELLLNIFAAELEKHNKYRVNNEDVFHALEGVYRLCRGGYACVGLLAGFALFGFRDPNGIRPLLFGERENPDGTKDYMLASESVVFKAHNFTKYRDLKPGEAVIIPKNCSKGEPEFKQVVPINSYRPDLFEYVYFARPDSVLDGISVYHTRLAMGSKLAENILKQLKPEDIDVVIPVPDTARTCALECANVLGKPYREGFVKNRYVGRTFIMPNQRERVSSVRRKLNPMESEFKGKKVLIVDDSIVRGTTSKEIVNMAKESGATKVYFASAAPAIRYNHIYGIDLTDTKNLIAYNRTDEEVAEVIGCERVIYQSLEDLIDCCKTDKITKFEDGVFTGNYVTGVEDGYIQELEEKRESIANNSSDMKAEVDIGLYNCADY</sequence>
<reference key="1">
    <citation type="journal article" date="1984" name="J. Biol. Chem.">
        <title>Glutamine nucleotide sequence of Saccharomyces cerevisiae ADE4 encoding phosphoribosylpyrophosphate amidotransferase.</title>
        <authorList>
            <person name="Maentsaelae P."/>
            <person name="Zalkin H."/>
        </authorList>
    </citation>
    <scope>NUCLEOTIDE SEQUENCE [GENOMIC DNA]</scope>
</reference>
<reference key="2">
    <citation type="journal article" date="1997" name="Nature">
        <title>The nucleotide sequence of Saccharomyces cerevisiae chromosome XIII.</title>
        <authorList>
            <person name="Bowman S."/>
            <person name="Churcher C.M."/>
            <person name="Badcock K."/>
            <person name="Brown D."/>
            <person name="Chillingworth T."/>
            <person name="Connor R."/>
            <person name="Dedman K."/>
            <person name="Devlin K."/>
            <person name="Gentles S."/>
            <person name="Hamlin N."/>
            <person name="Hunt S."/>
            <person name="Jagels K."/>
            <person name="Lye G."/>
            <person name="Moule S."/>
            <person name="Odell C."/>
            <person name="Pearson D."/>
            <person name="Rajandream M.A."/>
            <person name="Rice P."/>
            <person name="Skelton J."/>
            <person name="Walsh S.V."/>
            <person name="Whitehead S."/>
            <person name="Barrell B.G."/>
        </authorList>
    </citation>
    <scope>NUCLEOTIDE SEQUENCE [LARGE SCALE GENOMIC DNA]</scope>
    <source>
        <strain>ATCC 204508 / S288c</strain>
    </source>
</reference>
<reference key="3">
    <citation type="journal article" date="2014" name="G3 (Bethesda)">
        <title>The reference genome sequence of Saccharomyces cerevisiae: Then and now.</title>
        <authorList>
            <person name="Engel S.R."/>
            <person name="Dietrich F.S."/>
            <person name="Fisk D.G."/>
            <person name="Binkley G."/>
            <person name="Balakrishnan R."/>
            <person name="Costanzo M.C."/>
            <person name="Dwight S.S."/>
            <person name="Hitz B.C."/>
            <person name="Karra K."/>
            <person name="Nash R.S."/>
            <person name="Weng S."/>
            <person name="Wong E.D."/>
            <person name="Lloyd P."/>
            <person name="Skrzypek M.S."/>
            <person name="Miyasato S.R."/>
            <person name="Simison M."/>
            <person name="Cherry J.M."/>
        </authorList>
    </citation>
    <scope>GENOME REANNOTATION</scope>
    <source>
        <strain>ATCC 204508 / S288c</strain>
    </source>
</reference>
<reference key="4">
    <citation type="journal article" date="1987" name="Eur. Congr. Biotechnol.">
        <title>Deletion analysis of the 5' flanking region of yeast ADE4 gene.</title>
        <authorList>
            <person name="Lahti R."/>
            <person name="Glumoff V."/>
            <person name="Haemaelaeinen H."/>
            <person name="Paerssinen R."/>
            <person name="Maentsaelae P."/>
        </authorList>
    </citation>
    <scope>NUCLEOTIDE SEQUENCE [GENOMIC DNA] OF 1-14</scope>
</reference>
<reference key="5">
    <citation type="journal article" date="2003" name="Nature">
        <title>Global analysis of protein expression in yeast.</title>
        <authorList>
            <person name="Ghaemmaghami S."/>
            <person name="Huh W.-K."/>
            <person name="Bower K."/>
            <person name="Howson R.W."/>
            <person name="Belle A."/>
            <person name="Dephoure N."/>
            <person name="O'Shea E.K."/>
            <person name="Weissman J.S."/>
        </authorList>
    </citation>
    <scope>LEVEL OF PROTEIN EXPRESSION [LARGE SCALE ANALYSIS]</scope>
</reference>
<organism>
    <name type="scientific">Saccharomyces cerevisiae (strain ATCC 204508 / S288c)</name>
    <name type="common">Baker's yeast</name>
    <dbReference type="NCBI Taxonomy" id="559292"/>
    <lineage>
        <taxon>Eukaryota</taxon>
        <taxon>Fungi</taxon>
        <taxon>Dikarya</taxon>
        <taxon>Ascomycota</taxon>
        <taxon>Saccharomycotina</taxon>
        <taxon>Saccharomycetes</taxon>
        <taxon>Saccharomycetales</taxon>
        <taxon>Saccharomycetaceae</taxon>
        <taxon>Saccharomyces</taxon>
    </lineage>
</organism>
<feature type="chain" id="PRO_0000139647" description="Amidophosphoribosyltransferase">
    <location>
        <begin position="1"/>
        <end position="510"/>
    </location>
</feature>
<feature type="domain" description="Glutamine amidotransferase type-2" evidence="2">
    <location>
        <begin position="2"/>
        <end position="239"/>
    </location>
</feature>
<feature type="active site" description="Nucleophile" evidence="2">
    <location>
        <position position="2"/>
    </location>
</feature>
<feature type="binding site" evidence="1">
    <location>
        <position position="373"/>
    </location>
    <ligand>
        <name>Mg(2+)</name>
        <dbReference type="ChEBI" id="CHEBI:18420"/>
    </ligand>
</feature>
<feature type="binding site" evidence="1">
    <location>
        <position position="374"/>
    </location>
    <ligand>
        <name>Mg(2+)</name>
        <dbReference type="ChEBI" id="CHEBI:18420"/>
    </ligand>
</feature>
<feature type="sequence conflict" description="In Ref. 1; AAA34403/AAA34404." evidence="4" ref="1">
    <original>IY</original>
    <variation>VC</variation>
    <location>
        <begin position="46"/>
        <end position="47"/>
    </location>
</feature>
<feature type="sequence conflict" description="In Ref. 1; AAA34403/AAA34404." evidence="4" ref="1">
    <location>
        <position position="62"/>
    </location>
</feature>
<feature type="sequence conflict" description="In Ref. 1." evidence="4" ref="1">
    <original>GSSANS</original>
    <variation>PLRLIL</variation>
    <location>
        <begin position="82"/>
        <end position="87"/>
    </location>
</feature>
<feature type="sequence conflict" description="In Ref. 1; AAA34403/AAA34404." evidence="4" ref="1">
    <original>VFH</original>
    <variation>GFSN</variation>
    <location>
        <begin position="156"/>
        <end position="158"/>
    </location>
</feature>
<feature type="sequence conflict" description="In Ref. 1; AAA34403/AAA34404." evidence="4" ref="1">
    <original>V</original>
    <variation>G</variation>
    <location>
        <position position="234"/>
    </location>
</feature>
<feature type="sequence conflict" description="In Ref. 1; AAA34403/AAA34404." evidence="4" ref="1">
    <original>E</original>
    <variation>Q</variation>
    <location>
        <position position="291"/>
    </location>
</feature>
<gene>
    <name type="primary">ADE4</name>
    <name type="ordered locus">YMR300C</name>
    <name type="ORF">YM9952.02C</name>
</gene>
<keyword id="KW-0315">Glutamine amidotransferase</keyword>
<keyword id="KW-0328">Glycosyltransferase</keyword>
<keyword id="KW-0460">Magnesium</keyword>
<keyword id="KW-0479">Metal-binding</keyword>
<keyword id="KW-0658">Purine biosynthesis</keyword>
<keyword id="KW-1185">Reference proteome</keyword>
<keyword id="KW-0808">Transferase</keyword>
<dbReference type="EC" id="2.4.2.14"/>
<dbReference type="EMBL" id="K02203">
    <property type="protein sequence ID" value="AAA34403.1"/>
    <property type="molecule type" value="Genomic_DNA"/>
</dbReference>
<dbReference type="EMBL" id="M57633">
    <property type="protein sequence ID" value="AAA34405.1"/>
    <property type="molecule type" value="Genomic_DNA"/>
</dbReference>
<dbReference type="EMBL" id="M74309">
    <property type="protein sequence ID" value="AAA34404.1"/>
    <property type="molecule type" value="Genomic_DNA"/>
</dbReference>
<dbReference type="EMBL" id="Z49212">
    <property type="protein sequence ID" value="CAA89133.1"/>
    <property type="molecule type" value="Genomic_DNA"/>
</dbReference>
<dbReference type="EMBL" id="BK006946">
    <property type="protein sequence ID" value="DAA10201.1"/>
    <property type="molecule type" value="Genomic_DNA"/>
</dbReference>
<dbReference type="PIR" id="S53970">
    <property type="entry name" value="S53970"/>
</dbReference>
<dbReference type="RefSeq" id="NP_014029.1">
    <property type="nucleotide sequence ID" value="NM_001182809.1"/>
</dbReference>
<dbReference type="SMR" id="P04046"/>
<dbReference type="BioGRID" id="35480">
    <property type="interactions" value="159"/>
</dbReference>
<dbReference type="DIP" id="DIP-6727N"/>
<dbReference type="FunCoup" id="P04046">
    <property type="interactions" value="879"/>
</dbReference>
<dbReference type="IntAct" id="P04046">
    <property type="interactions" value="14"/>
</dbReference>
<dbReference type="MINT" id="P04046"/>
<dbReference type="STRING" id="4932.YMR300C"/>
<dbReference type="MEROPS" id="C44.001"/>
<dbReference type="iPTMnet" id="P04046"/>
<dbReference type="PaxDb" id="4932-YMR300C"/>
<dbReference type="PeptideAtlas" id="P04046"/>
<dbReference type="EnsemblFungi" id="YMR300C_mRNA">
    <property type="protein sequence ID" value="YMR300C"/>
    <property type="gene ID" value="YMR300C"/>
</dbReference>
<dbReference type="GeneID" id="855346"/>
<dbReference type="KEGG" id="sce:YMR300C"/>
<dbReference type="AGR" id="SGD:S000004915"/>
<dbReference type="SGD" id="S000004915">
    <property type="gene designation" value="ADE4"/>
</dbReference>
<dbReference type="VEuPathDB" id="FungiDB:YMR300C"/>
<dbReference type="eggNOG" id="KOG0572">
    <property type="taxonomic scope" value="Eukaryota"/>
</dbReference>
<dbReference type="HOGENOM" id="CLU_022389_2_1_1"/>
<dbReference type="InParanoid" id="P04046"/>
<dbReference type="OMA" id="IRHFGVK"/>
<dbReference type="OrthoDB" id="191723at2759"/>
<dbReference type="BioCyc" id="MetaCyc:YMR300C-MONOMER"/>
<dbReference type="BioCyc" id="YEAST:YMR300C-MONOMER"/>
<dbReference type="UniPathway" id="UPA00074">
    <property type="reaction ID" value="UER00124"/>
</dbReference>
<dbReference type="BioGRID-ORCS" id="855346">
    <property type="hits" value="2 hits in 10 CRISPR screens"/>
</dbReference>
<dbReference type="PHI-base" id="PHI:502"/>
<dbReference type="PRO" id="PR:P04046"/>
<dbReference type="Proteomes" id="UP000002311">
    <property type="component" value="Chromosome XIII"/>
</dbReference>
<dbReference type="RNAct" id="P04046">
    <property type="molecule type" value="protein"/>
</dbReference>
<dbReference type="GO" id="GO:0005737">
    <property type="term" value="C:cytoplasm"/>
    <property type="evidence" value="ECO:0007005"/>
    <property type="project" value="SGD"/>
</dbReference>
<dbReference type="GO" id="GO:0004044">
    <property type="term" value="F:amidophosphoribosyltransferase activity"/>
    <property type="evidence" value="ECO:0000314"/>
    <property type="project" value="SGD"/>
</dbReference>
<dbReference type="GO" id="GO:0046872">
    <property type="term" value="F:metal ion binding"/>
    <property type="evidence" value="ECO:0007669"/>
    <property type="project" value="UniProtKB-KW"/>
</dbReference>
<dbReference type="GO" id="GO:0006189">
    <property type="term" value="P:'de novo' IMP biosynthetic process"/>
    <property type="evidence" value="ECO:0000315"/>
    <property type="project" value="SGD"/>
</dbReference>
<dbReference type="GO" id="GO:0009113">
    <property type="term" value="P:purine nucleobase biosynthetic process"/>
    <property type="evidence" value="ECO:0007669"/>
    <property type="project" value="InterPro"/>
</dbReference>
<dbReference type="GO" id="GO:0006164">
    <property type="term" value="P:purine nucleotide biosynthetic process"/>
    <property type="evidence" value="ECO:0000318"/>
    <property type="project" value="GO_Central"/>
</dbReference>
<dbReference type="CDD" id="cd00715">
    <property type="entry name" value="GPATase_N"/>
    <property type="match status" value="1"/>
</dbReference>
<dbReference type="CDD" id="cd06223">
    <property type="entry name" value="PRTases_typeI"/>
    <property type="match status" value="1"/>
</dbReference>
<dbReference type="Gene3D" id="3.40.50.2020">
    <property type="match status" value="1"/>
</dbReference>
<dbReference type="Gene3D" id="3.60.20.10">
    <property type="entry name" value="Glutamine Phosphoribosylpyrophosphate, subunit 1, domain 1"/>
    <property type="match status" value="1"/>
</dbReference>
<dbReference type="HAMAP" id="MF_01931">
    <property type="entry name" value="PurF"/>
    <property type="match status" value="1"/>
</dbReference>
<dbReference type="InterPro" id="IPR017932">
    <property type="entry name" value="GATase_2_dom"/>
</dbReference>
<dbReference type="InterPro" id="IPR029055">
    <property type="entry name" value="Ntn_hydrolases_N"/>
</dbReference>
<dbReference type="InterPro" id="IPR000836">
    <property type="entry name" value="PRibTrfase_dom"/>
</dbReference>
<dbReference type="InterPro" id="IPR029057">
    <property type="entry name" value="PRTase-like"/>
</dbReference>
<dbReference type="InterPro" id="IPR005854">
    <property type="entry name" value="PurF"/>
</dbReference>
<dbReference type="InterPro" id="IPR035584">
    <property type="entry name" value="PurF_N"/>
</dbReference>
<dbReference type="NCBIfam" id="TIGR01134">
    <property type="entry name" value="purF"/>
    <property type="match status" value="1"/>
</dbReference>
<dbReference type="PANTHER" id="PTHR11907">
    <property type="entry name" value="AMIDOPHOSPHORIBOSYLTRANSFERASE"/>
    <property type="match status" value="1"/>
</dbReference>
<dbReference type="Pfam" id="PF13522">
    <property type="entry name" value="GATase_6"/>
    <property type="match status" value="1"/>
</dbReference>
<dbReference type="Pfam" id="PF00156">
    <property type="entry name" value="Pribosyltran"/>
    <property type="match status" value="1"/>
</dbReference>
<dbReference type="PIRSF" id="PIRSF000485">
    <property type="entry name" value="Amd_phspho_trans"/>
    <property type="match status" value="1"/>
</dbReference>
<dbReference type="SUPFAM" id="SSF56235">
    <property type="entry name" value="N-terminal nucleophile aminohydrolases (Ntn hydrolases)"/>
    <property type="match status" value="1"/>
</dbReference>
<dbReference type="SUPFAM" id="SSF53271">
    <property type="entry name" value="PRTase-like"/>
    <property type="match status" value="1"/>
</dbReference>
<dbReference type="PROSITE" id="PS51278">
    <property type="entry name" value="GATASE_TYPE_2"/>
    <property type="match status" value="1"/>
</dbReference>
<dbReference type="PROSITE" id="PS00103">
    <property type="entry name" value="PUR_PYR_PR_TRANSFER"/>
    <property type="match status" value="1"/>
</dbReference>
<evidence type="ECO:0000250" key="1"/>
<evidence type="ECO:0000255" key="2">
    <source>
        <dbReference type="PROSITE-ProRule" id="PRU00609"/>
    </source>
</evidence>
<evidence type="ECO:0000269" key="3">
    <source>
    </source>
</evidence>
<evidence type="ECO:0000305" key="4"/>
<accession>P04046</accession>
<accession>D6W0C7</accession>
<protein>
    <recommendedName>
        <fullName>Amidophosphoribosyltransferase</fullName>
        <shortName>ATase</shortName>
        <ecNumber>2.4.2.14</ecNumber>
    </recommendedName>
    <alternativeName>
        <fullName>Glutamine phosphoribosylpyrophosphate amidotransferase</fullName>
    </alternativeName>
</protein>
<comment type="catalytic activity">
    <reaction>
        <text>5-phospho-beta-D-ribosylamine + L-glutamate + diphosphate = 5-phospho-alpha-D-ribose 1-diphosphate + L-glutamine + H2O</text>
        <dbReference type="Rhea" id="RHEA:14905"/>
        <dbReference type="ChEBI" id="CHEBI:15377"/>
        <dbReference type="ChEBI" id="CHEBI:29985"/>
        <dbReference type="ChEBI" id="CHEBI:33019"/>
        <dbReference type="ChEBI" id="CHEBI:58017"/>
        <dbReference type="ChEBI" id="CHEBI:58359"/>
        <dbReference type="ChEBI" id="CHEBI:58681"/>
        <dbReference type="EC" id="2.4.2.14"/>
    </reaction>
</comment>
<comment type="cofactor">
    <cofactor>
        <name>Mg(2+)</name>
        <dbReference type="ChEBI" id="CHEBI:18420"/>
    </cofactor>
    <text>Binds 1 Mg(2+) ion per subunit.</text>
</comment>
<comment type="pathway">
    <text>Purine metabolism; IMP biosynthesis via de novo pathway; N(1)-(5-phospho-D-ribosyl)glycinamide from 5-phospho-alpha-D-ribose 1-diphosphate: step 1/2.</text>
</comment>
<comment type="miscellaneous">
    <text evidence="3">Present with 18700 molecules/cell in log phase SD medium.</text>
</comment>
<comment type="similarity">
    <text evidence="4">In the C-terminal section; belongs to the purine/pyrimidine phosphoribosyltransferase family.</text>
</comment>